<proteinExistence type="evidence at protein level"/>
<accession>Q6PFY8</accession>
<accession>E9Q2K9</accession>
<accession>Q3U5H4</accession>
<accession>Q8BVT5</accession>
<organism>
    <name type="scientific">Mus musculus</name>
    <name type="common">Mouse</name>
    <dbReference type="NCBI Taxonomy" id="10090"/>
    <lineage>
        <taxon>Eukaryota</taxon>
        <taxon>Metazoa</taxon>
        <taxon>Chordata</taxon>
        <taxon>Craniata</taxon>
        <taxon>Vertebrata</taxon>
        <taxon>Euteleostomi</taxon>
        <taxon>Mammalia</taxon>
        <taxon>Eutheria</taxon>
        <taxon>Euarchontoglires</taxon>
        <taxon>Glires</taxon>
        <taxon>Rodentia</taxon>
        <taxon>Myomorpha</taxon>
        <taxon>Muroidea</taxon>
        <taxon>Muridae</taxon>
        <taxon>Murinae</taxon>
        <taxon>Mus</taxon>
        <taxon>Mus</taxon>
    </lineage>
</organism>
<gene>
    <name type="primary">Trim45</name>
</gene>
<protein>
    <recommendedName>
        <fullName>E3 ubiquitin-protein ligase TRIM45</fullName>
        <ecNumber evidence="1">2.3.2.27</ecNumber>
    </recommendedName>
    <alternativeName>
        <fullName>RING finger protein 99</fullName>
    </alternativeName>
    <alternativeName>
        <fullName>Tripartite motif-containing protein 45</fullName>
    </alternativeName>
</protein>
<reference key="1">
    <citation type="journal article" date="2005" name="Science">
        <title>The transcriptional landscape of the mammalian genome.</title>
        <authorList>
            <person name="Carninci P."/>
            <person name="Kasukawa T."/>
            <person name="Katayama S."/>
            <person name="Gough J."/>
            <person name="Frith M.C."/>
            <person name="Maeda N."/>
            <person name="Oyama R."/>
            <person name="Ravasi T."/>
            <person name="Lenhard B."/>
            <person name="Wells C."/>
            <person name="Kodzius R."/>
            <person name="Shimokawa K."/>
            <person name="Bajic V.B."/>
            <person name="Brenner S.E."/>
            <person name="Batalov S."/>
            <person name="Forrest A.R."/>
            <person name="Zavolan M."/>
            <person name="Davis M.J."/>
            <person name="Wilming L.G."/>
            <person name="Aidinis V."/>
            <person name="Allen J.E."/>
            <person name="Ambesi-Impiombato A."/>
            <person name="Apweiler R."/>
            <person name="Aturaliya R.N."/>
            <person name="Bailey T.L."/>
            <person name="Bansal M."/>
            <person name="Baxter L."/>
            <person name="Beisel K.W."/>
            <person name="Bersano T."/>
            <person name="Bono H."/>
            <person name="Chalk A.M."/>
            <person name="Chiu K.P."/>
            <person name="Choudhary V."/>
            <person name="Christoffels A."/>
            <person name="Clutterbuck D.R."/>
            <person name="Crowe M.L."/>
            <person name="Dalla E."/>
            <person name="Dalrymple B.P."/>
            <person name="de Bono B."/>
            <person name="Della Gatta G."/>
            <person name="di Bernardo D."/>
            <person name="Down T."/>
            <person name="Engstrom P."/>
            <person name="Fagiolini M."/>
            <person name="Faulkner G."/>
            <person name="Fletcher C.F."/>
            <person name="Fukushima T."/>
            <person name="Furuno M."/>
            <person name="Futaki S."/>
            <person name="Gariboldi M."/>
            <person name="Georgii-Hemming P."/>
            <person name="Gingeras T.R."/>
            <person name="Gojobori T."/>
            <person name="Green R.E."/>
            <person name="Gustincich S."/>
            <person name="Harbers M."/>
            <person name="Hayashi Y."/>
            <person name="Hensch T.K."/>
            <person name="Hirokawa N."/>
            <person name="Hill D."/>
            <person name="Huminiecki L."/>
            <person name="Iacono M."/>
            <person name="Ikeo K."/>
            <person name="Iwama A."/>
            <person name="Ishikawa T."/>
            <person name="Jakt M."/>
            <person name="Kanapin A."/>
            <person name="Katoh M."/>
            <person name="Kawasawa Y."/>
            <person name="Kelso J."/>
            <person name="Kitamura H."/>
            <person name="Kitano H."/>
            <person name="Kollias G."/>
            <person name="Krishnan S.P."/>
            <person name="Kruger A."/>
            <person name="Kummerfeld S.K."/>
            <person name="Kurochkin I.V."/>
            <person name="Lareau L.F."/>
            <person name="Lazarevic D."/>
            <person name="Lipovich L."/>
            <person name="Liu J."/>
            <person name="Liuni S."/>
            <person name="McWilliam S."/>
            <person name="Madan Babu M."/>
            <person name="Madera M."/>
            <person name="Marchionni L."/>
            <person name="Matsuda H."/>
            <person name="Matsuzawa S."/>
            <person name="Miki H."/>
            <person name="Mignone F."/>
            <person name="Miyake S."/>
            <person name="Morris K."/>
            <person name="Mottagui-Tabar S."/>
            <person name="Mulder N."/>
            <person name="Nakano N."/>
            <person name="Nakauchi H."/>
            <person name="Ng P."/>
            <person name="Nilsson R."/>
            <person name="Nishiguchi S."/>
            <person name="Nishikawa S."/>
            <person name="Nori F."/>
            <person name="Ohara O."/>
            <person name="Okazaki Y."/>
            <person name="Orlando V."/>
            <person name="Pang K.C."/>
            <person name="Pavan W.J."/>
            <person name="Pavesi G."/>
            <person name="Pesole G."/>
            <person name="Petrovsky N."/>
            <person name="Piazza S."/>
            <person name="Reed J."/>
            <person name="Reid J.F."/>
            <person name="Ring B.Z."/>
            <person name="Ringwald M."/>
            <person name="Rost B."/>
            <person name="Ruan Y."/>
            <person name="Salzberg S.L."/>
            <person name="Sandelin A."/>
            <person name="Schneider C."/>
            <person name="Schoenbach C."/>
            <person name="Sekiguchi K."/>
            <person name="Semple C.A."/>
            <person name="Seno S."/>
            <person name="Sessa L."/>
            <person name="Sheng Y."/>
            <person name="Shibata Y."/>
            <person name="Shimada H."/>
            <person name="Shimada K."/>
            <person name="Silva D."/>
            <person name="Sinclair B."/>
            <person name="Sperling S."/>
            <person name="Stupka E."/>
            <person name="Sugiura K."/>
            <person name="Sultana R."/>
            <person name="Takenaka Y."/>
            <person name="Taki K."/>
            <person name="Tammoja K."/>
            <person name="Tan S.L."/>
            <person name="Tang S."/>
            <person name="Taylor M.S."/>
            <person name="Tegner J."/>
            <person name="Teichmann S.A."/>
            <person name="Ueda H.R."/>
            <person name="van Nimwegen E."/>
            <person name="Verardo R."/>
            <person name="Wei C.L."/>
            <person name="Yagi K."/>
            <person name="Yamanishi H."/>
            <person name="Zabarovsky E."/>
            <person name="Zhu S."/>
            <person name="Zimmer A."/>
            <person name="Hide W."/>
            <person name="Bult C."/>
            <person name="Grimmond S.M."/>
            <person name="Teasdale R.D."/>
            <person name="Liu E.T."/>
            <person name="Brusic V."/>
            <person name="Quackenbush J."/>
            <person name="Wahlestedt C."/>
            <person name="Mattick J.S."/>
            <person name="Hume D.A."/>
            <person name="Kai C."/>
            <person name="Sasaki D."/>
            <person name="Tomaru Y."/>
            <person name="Fukuda S."/>
            <person name="Kanamori-Katayama M."/>
            <person name="Suzuki M."/>
            <person name="Aoki J."/>
            <person name="Arakawa T."/>
            <person name="Iida J."/>
            <person name="Imamura K."/>
            <person name="Itoh M."/>
            <person name="Kato T."/>
            <person name="Kawaji H."/>
            <person name="Kawagashira N."/>
            <person name="Kawashima T."/>
            <person name="Kojima M."/>
            <person name="Kondo S."/>
            <person name="Konno H."/>
            <person name="Nakano K."/>
            <person name="Ninomiya N."/>
            <person name="Nishio T."/>
            <person name="Okada M."/>
            <person name="Plessy C."/>
            <person name="Shibata K."/>
            <person name="Shiraki T."/>
            <person name="Suzuki S."/>
            <person name="Tagami M."/>
            <person name="Waki K."/>
            <person name="Watahiki A."/>
            <person name="Okamura-Oho Y."/>
            <person name="Suzuki H."/>
            <person name="Kawai J."/>
            <person name="Hayashizaki Y."/>
        </authorList>
    </citation>
    <scope>NUCLEOTIDE SEQUENCE [LARGE SCALE MRNA] (ISOFORM 1)</scope>
    <scope>NUCLEOTIDE SEQUENCE [LARGE SCALE MRNA] OF 3-580 (ISOFORM 2)</scope>
    <source>
        <strain>C57BL/6J</strain>
        <tissue>Bone marrow</tissue>
        <tissue>Testis</tissue>
    </source>
</reference>
<reference key="2">
    <citation type="journal article" date="2009" name="PLoS Biol.">
        <title>Lineage-specific biology revealed by a finished genome assembly of the mouse.</title>
        <authorList>
            <person name="Church D.M."/>
            <person name="Goodstadt L."/>
            <person name="Hillier L.W."/>
            <person name="Zody M.C."/>
            <person name="Goldstein S."/>
            <person name="She X."/>
            <person name="Bult C.J."/>
            <person name="Agarwala R."/>
            <person name="Cherry J.L."/>
            <person name="DiCuccio M."/>
            <person name="Hlavina W."/>
            <person name="Kapustin Y."/>
            <person name="Meric P."/>
            <person name="Maglott D."/>
            <person name="Birtle Z."/>
            <person name="Marques A.C."/>
            <person name="Graves T."/>
            <person name="Zhou S."/>
            <person name="Teague B."/>
            <person name="Potamousis K."/>
            <person name="Churas C."/>
            <person name="Place M."/>
            <person name="Herschleb J."/>
            <person name="Runnheim R."/>
            <person name="Forrest D."/>
            <person name="Amos-Landgraf J."/>
            <person name="Schwartz D.C."/>
            <person name="Cheng Z."/>
            <person name="Lindblad-Toh K."/>
            <person name="Eichler E.E."/>
            <person name="Ponting C.P."/>
        </authorList>
    </citation>
    <scope>NUCLEOTIDE SEQUENCE [LARGE SCALE GENOMIC DNA]</scope>
    <source>
        <strain>C57BL/6J</strain>
    </source>
</reference>
<reference key="3">
    <citation type="journal article" date="2004" name="Genome Res.">
        <title>The status, quality, and expansion of the NIH full-length cDNA project: the Mammalian Gene Collection (MGC).</title>
        <authorList>
            <consortium name="The MGC Project Team"/>
        </authorList>
    </citation>
    <scope>NUCLEOTIDE SEQUENCE [LARGE SCALE MRNA] (ISOFORM 1)</scope>
    <source>
        <strain>C57BL/6J</strain>
        <tissue>Brain</tissue>
    </source>
</reference>
<reference key="4">
    <citation type="journal article" date="2023" name="Cell Death Differ.">
        <title>E3 ligase RNF99 negatively regulates TLR-mediated inflammatory immune response via K48-linked ubiquitination of TAB2.</title>
        <authorList>
            <person name="Zhang J."/>
            <person name="Cao L."/>
            <person name="Gao A."/>
            <person name="Ren R."/>
            <person name="Yu L."/>
            <person name="Li Q."/>
            <person name="Liu Y."/>
            <person name="Qi W."/>
            <person name="Hou Y."/>
            <person name="Sui W."/>
            <person name="Su G."/>
            <person name="Zhang Y."/>
            <person name="Zhang C."/>
            <person name="Zhang M."/>
        </authorList>
    </citation>
    <scope>FUNCTION</scope>
    <scope>DISRUPTION PHENOTYPE</scope>
</reference>
<feature type="chain" id="PRO_0000056267" description="E3 ubiquitin-protein ligase TRIM45">
    <location>
        <begin position="1"/>
        <end position="580"/>
    </location>
</feature>
<feature type="repeat" description="Filamin">
    <location>
        <begin position="394"/>
        <end position="497"/>
    </location>
</feature>
<feature type="zinc finger region" description="RING-type" evidence="4">
    <location>
        <begin position="29"/>
        <end position="98"/>
    </location>
</feature>
<feature type="zinc finger region" description="B box-type 1" evidence="3">
    <location>
        <begin position="130"/>
        <end position="176"/>
    </location>
</feature>
<feature type="zinc finger region" description="B box-type 2" evidence="3">
    <location>
        <begin position="186"/>
        <end position="227"/>
    </location>
</feature>
<feature type="coiled-coil region" evidence="2">
    <location>
        <begin position="249"/>
        <end position="329"/>
    </location>
</feature>
<feature type="binding site" evidence="3">
    <location>
        <position position="135"/>
    </location>
    <ligand>
        <name>Zn(2+)</name>
        <dbReference type="ChEBI" id="CHEBI:29105"/>
        <label>1</label>
    </ligand>
</feature>
<feature type="binding site" evidence="3">
    <location>
        <position position="138"/>
    </location>
    <ligand>
        <name>Zn(2+)</name>
        <dbReference type="ChEBI" id="CHEBI:29105"/>
        <label>1</label>
    </ligand>
</feature>
<feature type="binding site" evidence="3">
    <location>
        <position position="158"/>
    </location>
    <ligand>
        <name>Zn(2+)</name>
        <dbReference type="ChEBI" id="CHEBI:29105"/>
        <label>1</label>
    </ligand>
</feature>
<feature type="binding site" evidence="3">
    <location>
        <position position="162"/>
    </location>
    <ligand>
        <name>Zn(2+)</name>
        <dbReference type="ChEBI" id="CHEBI:29105"/>
        <label>1</label>
    </ligand>
</feature>
<feature type="binding site" evidence="3">
    <location>
        <position position="191"/>
    </location>
    <ligand>
        <name>Zn(2+)</name>
        <dbReference type="ChEBI" id="CHEBI:29105"/>
        <label>2</label>
    </ligand>
</feature>
<feature type="binding site" evidence="3">
    <location>
        <position position="194"/>
    </location>
    <ligand>
        <name>Zn(2+)</name>
        <dbReference type="ChEBI" id="CHEBI:29105"/>
        <label>2</label>
    </ligand>
</feature>
<feature type="binding site" evidence="3">
    <location>
        <position position="214"/>
    </location>
    <ligand>
        <name>Zn(2+)</name>
        <dbReference type="ChEBI" id="CHEBI:29105"/>
        <label>2</label>
    </ligand>
</feature>
<feature type="binding site" evidence="3">
    <location>
        <position position="219"/>
    </location>
    <ligand>
        <name>Zn(2+)</name>
        <dbReference type="ChEBI" id="CHEBI:29105"/>
        <label>2</label>
    </ligand>
</feature>
<feature type="splice variant" id="VSP_012001" description="In isoform 2." evidence="6">
    <original>GGYLGCGHGHKGHPGRPHWSCCGKFIEKSECSFTSGQGAPRSLLRTVAL</original>
    <variation>ARRPKQQQARVRPFAASQVDTLAVATDTKATRAVHTGLAVGSSLRSPSARSRVGRAPRGVCLGPWRSDASWGQVGPGNPEASITSAMQRTQSLSSSKETDRIKDEVLSLTSDFKCFLCGHLSCTMAECRPPLHRSSRQAADLLHGKLSCFIRALRCLCHGTMSSWSREDFMPSFPLCCSLSGLPRARVSGLLLEDETPLAHHLFVVYFQWFPSTQFMMIITVLPSR</variation>
    <location>
        <begin position="532"/>
        <end position="580"/>
    </location>
</feature>
<feature type="sequence conflict" description="In Ref. 3; AAH57358." evidence="6" ref="3">
    <original>E</original>
    <variation>G</variation>
    <location>
        <position position="250"/>
    </location>
</feature>
<feature type="sequence conflict" description="In Ref. 1; BAC36409." evidence="6" ref="1">
    <original>R</original>
    <variation>L</variation>
    <location>
        <position position="303"/>
    </location>
</feature>
<feature type="sequence conflict" description="In Ref. 1; BAC36409." evidence="6" ref="1">
    <original>R</original>
    <variation>S</variation>
    <location sequence="Q6PFY8-2">
        <position position="534"/>
    </location>
</feature>
<feature type="sequence conflict" description="In Ref. 1; BAC36409." evidence="6" ref="1">
    <original>P</original>
    <variation>T</variation>
    <location sequence="Q6PFY8-2">
        <position position="535"/>
    </location>
</feature>
<dbReference type="EC" id="2.3.2.27" evidence="1"/>
<dbReference type="EMBL" id="AK150574">
    <property type="protein sequence ID" value="BAE29669.1"/>
    <property type="molecule type" value="mRNA"/>
</dbReference>
<dbReference type="EMBL" id="AK153571">
    <property type="protein sequence ID" value="BAE32104.1"/>
    <property type="molecule type" value="mRNA"/>
</dbReference>
<dbReference type="EMBL" id="AK076600">
    <property type="protein sequence ID" value="BAC36409.1"/>
    <property type="molecule type" value="mRNA"/>
</dbReference>
<dbReference type="EMBL" id="AL669872">
    <property type="status" value="NOT_ANNOTATED_CDS"/>
    <property type="molecule type" value="Genomic_DNA"/>
</dbReference>
<dbReference type="EMBL" id="BC057358">
    <property type="protein sequence ID" value="AAH57358.1"/>
    <property type="molecule type" value="mRNA"/>
</dbReference>
<dbReference type="CCDS" id="CCDS17678.1">
    <molecule id="Q6PFY8-1"/>
</dbReference>
<dbReference type="CCDS" id="CCDS51018.1">
    <molecule id="Q6PFY8-2"/>
</dbReference>
<dbReference type="RefSeq" id="NP_001159424.1">
    <molecule id="Q6PFY8-1"/>
    <property type="nucleotide sequence ID" value="NM_001165952.1"/>
</dbReference>
<dbReference type="RefSeq" id="NP_001159425.1">
    <molecule id="Q6PFY8-2"/>
    <property type="nucleotide sequence ID" value="NM_001165953.1"/>
</dbReference>
<dbReference type="RefSeq" id="NP_919324.2">
    <molecule id="Q6PFY8-1"/>
    <property type="nucleotide sequence ID" value="NM_194343.2"/>
</dbReference>
<dbReference type="PDB" id="8SDI">
    <property type="method" value="X-ray"/>
    <property type="resolution" value="2.70 A"/>
    <property type="chains" value="A/B/C/D=249-329"/>
</dbReference>
<dbReference type="PDBsum" id="8SDI"/>
<dbReference type="SMR" id="Q6PFY8"/>
<dbReference type="BioGRID" id="230876">
    <property type="interactions" value="1"/>
</dbReference>
<dbReference type="FunCoup" id="Q6PFY8">
    <property type="interactions" value="1110"/>
</dbReference>
<dbReference type="STRING" id="10090.ENSMUSP00000115669"/>
<dbReference type="iPTMnet" id="Q6PFY8"/>
<dbReference type="PhosphoSitePlus" id="Q6PFY8"/>
<dbReference type="PaxDb" id="10090-ENSMUSP00000043389"/>
<dbReference type="ProteomicsDB" id="298219">
    <molecule id="Q6PFY8-1"/>
</dbReference>
<dbReference type="ProteomicsDB" id="298220">
    <molecule id="Q6PFY8-2"/>
</dbReference>
<dbReference type="Antibodypedia" id="33887">
    <property type="antibodies" value="234 antibodies from 21 providers"/>
</dbReference>
<dbReference type="DNASU" id="229644"/>
<dbReference type="Ensembl" id="ENSMUST00000037409.13">
    <molecule id="Q6PFY8-1"/>
    <property type="protein sequence ID" value="ENSMUSP00000043389.7"/>
    <property type="gene ID" value="ENSMUSG00000033233.18"/>
</dbReference>
<dbReference type="Ensembl" id="ENSMUST00000106980.9">
    <molecule id="Q6PFY8-1"/>
    <property type="protein sequence ID" value="ENSMUSP00000102593.3"/>
    <property type="gene ID" value="ENSMUSG00000033233.18"/>
</dbReference>
<dbReference type="Ensembl" id="ENSMUST00000134993.3">
    <molecule id="Q6PFY8-2"/>
    <property type="protein sequence ID" value="ENSMUSP00000115669.3"/>
    <property type="gene ID" value="ENSMUSG00000033233.18"/>
</dbReference>
<dbReference type="GeneID" id="229644"/>
<dbReference type="KEGG" id="mmu:229644"/>
<dbReference type="UCSC" id="uc008qqy.2">
    <molecule id="Q6PFY8-1"/>
    <property type="organism name" value="mouse"/>
</dbReference>
<dbReference type="UCSC" id="uc008qqz.2">
    <molecule id="Q6PFY8-2"/>
    <property type="organism name" value="mouse"/>
</dbReference>
<dbReference type="AGR" id="MGI:1918187"/>
<dbReference type="CTD" id="80263"/>
<dbReference type="MGI" id="MGI:1918187">
    <property type="gene designation" value="Trim45"/>
</dbReference>
<dbReference type="VEuPathDB" id="HostDB:ENSMUSG00000033233"/>
<dbReference type="eggNOG" id="KOG2177">
    <property type="taxonomic scope" value="Eukaryota"/>
</dbReference>
<dbReference type="GeneTree" id="ENSGT00940000154334"/>
<dbReference type="HOGENOM" id="CLU_013137_14_8_1"/>
<dbReference type="InParanoid" id="Q6PFY8"/>
<dbReference type="OMA" id="TRCPLCM"/>
<dbReference type="OrthoDB" id="28347at9989"/>
<dbReference type="TreeFam" id="TF324196"/>
<dbReference type="BioGRID-ORCS" id="229644">
    <property type="hits" value="0 hits in 79 CRISPR screens"/>
</dbReference>
<dbReference type="ChiTaRS" id="Ptgfrn">
    <property type="organism name" value="mouse"/>
</dbReference>
<dbReference type="PRO" id="PR:Q6PFY8"/>
<dbReference type="Proteomes" id="UP000000589">
    <property type="component" value="Chromosome 3"/>
</dbReference>
<dbReference type="RNAct" id="Q6PFY8">
    <property type="molecule type" value="protein"/>
</dbReference>
<dbReference type="Bgee" id="ENSMUSG00000033233">
    <property type="expression patterns" value="Expressed in epithelium of cochlear duct and 167 other cell types or tissues"/>
</dbReference>
<dbReference type="ExpressionAtlas" id="Q6PFY8">
    <property type="expression patterns" value="baseline and differential"/>
</dbReference>
<dbReference type="GO" id="GO:0005829">
    <property type="term" value="C:cytosol"/>
    <property type="evidence" value="ECO:0007669"/>
    <property type="project" value="Ensembl"/>
</dbReference>
<dbReference type="GO" id="GO:0045171">
    <property type="term" value="C:intercellular bridge"/>
    <property type="evidence" value="ECO:0007669"/>
    <property type="project" value="Ensembl"/>
</dbReference>
<dbReference type="GO" id="GO:0005654">
    <property type="term" value="C:nucleoplasm"/>
    <property type="evidence" value="ECO:0007669"/>
    <property type="project" value="Ensembl"/>
</dbReference>
<dbReference type="GO" id="GO:0061630">
    <property type="term" value="F:ubiquitin protein ligase activity"/>
    <property type="evidence" value="ECO:0007669"/>
    <property type="project" value="Ensembl"/>
</dbReference>
<dbReference type="GO" id="GO:0008270">
    <property type="term" value="F:zinc ion binding"/>
    <property type="evidence" value="ECO:0007669"/>
    <property type="project" value="UniProtKB-KW"/>
</dbReference>
<dbReference type="GO" id="GO:0060348">
    <property type="term" value="P:bone development"/>
    <property type="evidence" value="ECO:0000315"/>
    <property type="project" value="MGI"/>
</dbReference>
<dbReference type="GO" id="GO:0050728">
    <property type="term" value="P:negative regulation of inflammatory response"/>
    <property type="evidence" value="ECO:0007669"/>
    <property type="project" value="Ensembl"/>
</dbReference>
<dbReference type="GO" id="GO:0043161">
    <property type="term" value="P:proteasome-mediated ubiquitin-dependent protein catabolic process"/>
    <property type="evidence" value="ECO:0007669"/>
    <property type="project" value="Ensembl"/>
</dbReference>
<dbReference type="GO" id="GO:0070936">
    <property type="term" value="P:protein K48-linked ubiquitination"/>
    <property type="evidence" value="ECO:0007669"/>
    <property type="project" value="Ensembl"/>
</dbReference>
<dbReference type="CDD" id="cd19809">
    <property type="entry name" value="Bbox1_TRIM45_C-X"/>
    <property type="match status" value="1"/>
</dbReference>
<dbReference type="CDD" id="cd19785">
    <property type="entry name" value="Bbox2_TRIM45_C-X"/>
    <property type="match status" value="1"/>
</dbReference>
<dbReference type="CDD" id="cd20482">
    <property type="entry name" value="CC_brat-like"/>
    <property type="match status" value="1"/>
</dbReference>
<dbReference type="CDD" id="cd16588">
    <property type="entry name" value="RING-HC_TRIM45_C-VII"/>
    <property type="match status" value="1"/>
</dbReference>
<dbReference type="FunFam" id="2.60.40.10:FF:001485">
    <property type="entry name" value="Tripartite motif containing 45"/>
    <property type="match status" value="1"/>
</dbReference>
<dbReference type="Gene3D" id="3.30.160.60">
    <property type="entry name" value="Classic Zinc Finger"/>
    <property type="match status" value="1"/>
</dbReference>
<dbReference type="Gene3D" id="2.60.40.10">
    <property type="entry name" value="Immunoglobulins"/>
    <property type="match status" value="1"/>
</dbReference>
<dbReference type="Gene3D" id="3.30.40.10">
    <property type="entry name" value="Zinc/RING finger domain, C3HC4 (zinc finger)"/>
    <property type="match status" value="1"/>
</dbReference>
<dbReference type="InterPro" id="IPR003649">
    <property type="entry name" value="Bbox_C"/>
</dbReference>
<dbReference type="InterPro" id="IPR017868">
    <property type="entry name" value="Filamin/ABP280_repeat-like"/>
</dbReference>
<dbReference type="InterPro" id="IPR001298">
    <property type="entry name" value="Filamin/ABP280_rpt"/>
</dbReference>
<dbReference type="InterPro" id="IPR013783">
    <property type="entry name" value="Ig-like_fold"/>
</dbReference>
<dbReference type="InterPro" id="IPR014756">
    <property type="entry name" value="Ig_E-set"/>
</dbReference>
<dbReference type="InterPro" id="IPR047153">
    <property type="entry name" value="TRIM45/56/19-like"/>
</dbReference>
<dbReference type="InterPro" id="IPR027370">
    <property type="entry name" value="Znf-RING_euk"/>
</dbReference>
<dbReference type="InterPro" id="IPR000315">
    <property type="entry name" value="Znf_B-box"/>
</dbReference>
<dbReference type="InterPro" id="IPR001841">
    <property type="entry name" value="Znf_RING"/>
</dbReference>
<dbReference type="InterPro" id="IPR013083">
    <property type="entry name" value="Znf_RING/FYVE/PHD"/>
</dbReference>
<dbReference type="InterPro" id="IPR017907">
    <property type="entry name" value="Znf_RING_CS"/>
</dbReference>
<dbReference type="PANTHER" id="PTHR25462">
    <property type="entry name" value="BONUS, ISOFORM C-RELATED"/>
    <property type="match status" value="1"/>
</dbReference>
<dbReference type="PANTHER" id="PTHR25462:SF291">
    <property type="entry name" value="E3 UBIQUITIN-PROTEIN LIGASE TRIM45"/>
    <property type="match status" value="1"/>
</dbReference>
<dbReference type="Pfam" id="PF00630">
    <property type="entry name" value="Filamin"/>
    <property type="match status" value="1"/>
</dbReference>
<dbReference type="Pfam" id="PF00643">
    <property type="entry name" value="zf-B_box"/>
    <property type="match status" value="1"/>
</dbReference>
<dbReference type="Pfam" id="PF13445">
    <property type="entry name" value="zf-RING_UBOX"/>
    <property type="match status" value="1"/>
</dbReference>
<dbReference type="SMART" id="SM00502">
    <property type="entry name" value="BBC"/>
    <property type="match status" value="1"/>
</dbReference>
<dbReference type="SMART" id="SM00336">
    <property type="entry name" value="BBOX"/>
    <property type="match status" value="2"/>
</dbReference>
<dbReference type="SMART" id="SM00557">
    <property type="entry name" value="IG_FLMN"/>
    <property type="match status" value="1"/>
</dbReference>
<dbReference type="SMART" id="SM00184">
    <property type="entry name" value="RING"/>
    <property type="match status" value="1"/>
</dbReference>
<dbReference type="SUPFAM" id="SSF57845">
    <property type="entry name" value="B-box zinc-binding domain"/>
    <property type="match status" value="1"/>
</dbReference>
<dbReference type="SUPFAM" id="SSF81296">
    <property type="entry name" value="E set domains"/>
    <property type="match status" value="1"/>
</dbReference>
<dbReference type="SUPFAM" id="SSF57850">
    <property type="entry name" value="RING/U-box"/>
    <property type="match status" value="1"/>
</dbReference>
<dbReference type="PROSITE" id="PS50194">
    <property type="entry name" value="FILAMIN_REPEAT"/>
    <property type="match status" value="1"/>
</dbReference>
<dbReference type="PROSITE" id="PS50119">
    <property type="entry name" value="ZF_BBOX"/>
    <property type="match status" value="2"/>
</dbReference>
<dbReference type="PROSITE" id="PS00518">
    <property type="entry name" value="ZF_RING_1"/>
    <property type="match status" value="1"/>
</dbReference>
<dbReference type="PROSITE" id="PS50089">
    <property type="entry name" value="ZF_RING_2"/>
    <property type="match status" value="1"/>
</dbReference>
<name>TRI45_MOUSE</name>
<comment type="function">
    <text evidence="1 5">E3 ubiquitin-protein ligase that plays a role in the regulation of inflammatory response (PubMed:36681779). Mechanistically, mediates the 'Lys-48'-linked polyubiquitination of TAB2, a regulatory protein of the kinase TAK1, leading to its degradation via the proteasomal pathway and inhibition of the TLR-mediated inflammatory immune response. May act as a transcriptional repressor in mitogen-activated protein kinase signaling pathway.</text>
</comment>
<comment type="catalytic activity">
    <reaction evidence="1">
        <text>S-ubiquitinyl-[E2 ubiquitin-conjugating enzyme]-L-cysteine + [acceptor protein]-L-lysine = [E2 ubiquitin-conjugating enzyme]-L-cysteine + N(6)-ubiquitinyl-[acceptor protein]-L-lysine.</text>
        <dbReference type="EC" id="2.3.2.27"/>
    </reaction>
</comment>
<comment type="subcellular location">
    <subcellularLocation>
        <location evidence="1">Cytoplasm</location>
    </subcellularLocation>
    <subcellularLocation>
        <location evidence="1">Nucleus</location>
    </subcellularLocation>
</comment>
<comment type="alternative products">
    <event type="alternative splicing"/>
    <isoform>
        <id>Q6PFY8-1</id>
        <name>1</name>
        <sequence type="displayed"/>
    </isoform>
    <isoform>
        <id>Q6PFY8-2</id>
        <name>2</name>
        <sequence type="described" ref="VSP_012001"/>
    </isoform>
</comment>
<comment type="disruption phenotype">
    <text evidence="5">Deletion mutant mice show earlier onset of death and exhibit higher mortality in response to lethal challenge with LPS. The production of TNF-alpha, IL-6, and IL-1beta is also significantly up-regulated after TLR challenge.</text>
</comment>
<comment type="similarity">
    <text evidence="6">Belongs to the TRIM/RBCC family.</text>
</comment>
<evidence type="ECO:0000250" key="1">
    <source>
        <dbReference type="UniProtKB" id="Q9H8W5"/>
    </source>
</evidence>
<evidence type="ECO:0000255" key="2"/>
<evidence type="ECO:0000255" key="3">
    <source>
        <dbReference type="PROSITE-ProRule" id="PRU00024"/>
    </source>
</evidence>
<evidence type="ECO:0000255" key="4">
    <source>
        <dbReference type="PROSITE-ProRule" id="PRU00175"/>
    </source>
</evidence>
<evidence type="ECO:0000269" key="5">
    <source>
    </source>
</evidence>
<evidence type="ECO:0000305" key="6"/>
<keyword id="KW-0002">3D-structure</keyword>
<keyword id="KW-0025">Alternative splicing</keyword>
<keyword id="KW-0175">Coiled coil</keyword>
<keyword id="KW-0963">Cytoplasm</keyword>
<keyword id="KW-0479">Metal-binding</keyword>
<keyword id="KW-0539">Nucleus</keyword>
<keyword id="KW-1185">Reference proteome</keyword>
<keyword id="KW-0677">Repeat</keyword>
<keyword id="KW-0808">Transferase</keyword>
<keyword id="KW-0833">Ubl conjugation pathway</keyword>
<keyword id="KW-0862">Zinc</keyword>
<keyword id="KW-0863">Zinc-finger</keyword>
<sequence length="580" mass="64257">MSEIRKPLLGFVHKLQDANASGSSGKTHCPTCLRLFKVPRLLPCLHTVCTTCLEKLDPFSVVDIRGGDSDTSSEGSVFQDPELCSLQPQIGILCPVCDAQVDLPLGGVKALTVDHLAMNDVLLENLRGEGQGLVCDLCSDREVEKRCQTCKANLCHFCCQAHRRQKKTTYHTMVDLKDLKGYSQVGKPILCPSHPAEELRLFCELCDRPVCRDCVVGEHREHPYDFTSNVIHKHGDSVRELLRDTQPHVEALEDALAQIKSVNNALQERVEAVAADVRTFSEGYIKAIEEHRDKLLQQLDDIRIQRETALQLQKAQLEQLLADMRTGVEFTEHLLTSGSDLEILITKGVVVERLRKLNKVEYSARPGVNHKICFSPQEKAGQCQGYEVYGAINTQEVDPAQCVLQGEDLHRAREKQTASFTLFCKDASGQSMGRGGDNVHVEVVPKDKKDSPIRTVVQDNKDGSYRVSYTPKEPGIYTVWVCIREQHVQGSPFNVTVRRKHRPHPGVFHCCTFCSSGGQKAARCACGGTMPGGYLGCGHGHKGHPGRPHWSCCGKFIEKSECSFTSGQGAPRSLLRTVAL</sequence>